<feature type="chain" id="PRO_1000140955" description="Small ribosomal subunit protein uS3">
    <location>
        <begin position="1"/>
        <end position="218"/>
    </location>
</feature>
<feature type="domain" description="KH type-2" evidence="1">
    <location>
        <begin position="39"/>
        <end position="107"/>
    </location>
</feature>
<dbReference type="EMBL" id="CP000860">
    <property type="protein sequence ID" value="ACA58792.1"/>
    <property type="molecule type" value="Genomic_DNA"/>
</dbReference>
<dbReference type="RefSeq" id="WP_012301384.1">
    <property type="nucleotide sequence ID" value="NC_010424.1"/>
</dbReference>
<dbReference type="SMR" id="B1I1J4"/>
<dbReference type="STRING" id="477974.Daud_0231"/>
<dbReference type="KEGG" id="dau:Daud_0231"/>
<dbReference type="eggNOG" id="COG0092">
    <property type="taxonomic scope" value="Bacteria"/>
</dbReference>
<dbReference type="HOGENOM" id="CLU_058591_0_2_9"/>
<dbReference type="OrthoDB" id="9806396at2"/>
<dbReference type="Proteomes" id="UP000008544">
    <property type="component" value="Chromosome"/>
</dbReference>
<dbReference type="GO" id="GO:0022627">
    <property type="term" value="C:cytosolic small ribosomal subunit"/>
    <property type="evidence" value="ECO:0007669"/>
    <property type="project" value="TreeGrafter"/>
</dbReference>
<dbReference type="GO" id="GO:0003729">
    <property type="term" value="F:mRNA binding"/>
    <property type="evidence" value="ECO:0007669"/>
    <property type="project" value="UniProtKB-UniRule"/>
</dbReference>
<dbReference type="GO" id="GO:0019843">
    <property type="term" value="F:rRNA binding"/>
    <property type="evidence" value="ECO:0007669"/>
    <property type="project" value="UniProtKB-UniRule"/>
</dbReference>
<dbReference type="GO" id="GO:0003735">
    <property type="term" value="F:structural constituent of ribosome"/>
    <property type="evidence" value="ECO:0007669"/>
    <property type="project" value="InterPro"/>
</dbReference>
<dbReference type="GO" id="GO:0006412">
    <property type="term" value="P:translation"/>
    <property type="evidence" value="ECO:0007669"/>
    <property type="project" value="UniProtKB-UniRule"/>
</dbReference>
<dbReference type="CDD" id="cd02412">
    <property type="entry name" value="KH-II_30S_S3"/>
    <property type="match status" value="1"/>
</dbReference>
<dbReference type="FunFam" id="3.30.1140.32:FF:000001">
    <property type="entry name" value="30S ribosomal protein S3"/>
    <property type="match status" value="1"/>
</dbReference>
<dbReference type="FunFam" id="3.30.300.20:FF:000001">
    <property type="entry name" value="30S ribosomal protein S3"/>
    <property type="match status" value="1"/>
</dbReference>
<dbReference type="Gene3D" id="3.30.300.20">
    <property type="match status" value="1"/>
</dbReference>
<dbReference type="Gene3D" id="3.30.1140.32">
    <property type="entry name" value="Ribosomal protein S3, C-terminal domain"/>
    <property type="match status" value="1"/>
</dbReference>
<dbReference type="HAMAP" id="MF_01309_B">
    <property type="entry name" value="Ribosomal_uS3_B"/>
    <property type="match status" value="1"/>
</dbReference>
<dbReference type="InterPro" id="IPR004087">
    <property type="entry name" value="KH_dom"/>
</dbReference>
<dbReference type="InterPro" id="IPR015946">
    <property type="entry name" value="KH_dom-like_a/b"/>
</dbReference>
<dbReference type="InterPro" id="IPR004044">
    <property type="entry name" value="KH_dom_type_2"/>
</dbReference>
<dbReference type="InterPro" id="IPR009019">
    <property type="entry name" value="KH_sf_prok-type"/>
</dbReference>
<dbReference type="InterPro" id="IPR036419">
    <property type="entry name" value="Ribosomal_S3_C_sf"/>
</dbReference>
<dbReference type="InterPro" id="IPR005704">
    <property type="entry name" value="Ribosomal_uS3_bac-typ"/>
</dbReference>
<dbReference type="InterPro" id="IPR001351">
    <property type="entry name" value="Ribosomal_uS3_C"/>
</dbReference>
<dbReference type="InterPro" id="IPR018280">
    <property type="entry name" value="Ribosomal_uS3_CS"/>
</dbReference>
<dbReference type="NCBIfam" id="TIGR01009">
    <property type="entry name" value="rpsC_bact"/>
    <property type="match status" value="1"/>
</dbReference>
<dbReference type="PANTHER" id="PTHR11760">
    <property type="entry name" value="30S/40S RIBOSOMAL PROTEIN S3"/>
    <property type="match status" value="1"/>
</dbReference>
<dbReference type="PANTHER" id="PTHR11760:SF19">
    <property type="entry name" value="SMALL RIBOSOMAL SUBUNIT PROTEIN US3C"/>
    <property type="match status" value="1"/>
</dbReference>
<dbReference type="Pfam" id="PF07650">
    <property type="entry name" value="KH_2"/>
    <property type="match status" value="1"/>
</dbReference>
<dbReference type="Pfam" id="PF00189">
    <property type="entry name" value="Ribosomal_S3_C"/>
    <property type="match status" value="1"/>
</dbReference>
<dbReference type="SMART" id="SM00322">
    <property type="entry name" value="KH"/>
    <property type="match status" value="1"/>
</dbReference>
<dbReference type="SUPFAM" id="SSF54814">
    <property type="entry name" value="Prokaryotic type KH domain (KH-domain type II)"/>
    <property type="match status" value="1"/>
</dbReference>
<dbReference type="SUPFAM" id="SSF54821">
    <property type="entry name" value="Ribosomal protein S3 C-terminal domain"/>
    <property type="match status" value="1"/>
</dbReference>
<dbReference type="PROSITE" id="PS50823">
    <property type="entry name" value="KH_TYPE_2"/>
    <property type="match status" value="1"/>
</dbReference>
<dbReference type="PROSITE" id="PS00548">
    <property type="entry name" value="RIBOSOMAL_S3"/>
    <property type="match status" value="1"/>
</dbReference>
<evidence type="ECO:0000255" key="1">
    <source>
        <dbReference type="HAMAP-Rule" id="MF_01309"/>
    </source>
</evidence>
<evidence type="ECO:0000305" key="2"/>
<comment type="function">
    <text evidence="1">Binds the lower part of the 30S subunit head. Binds mRNA in the 70S ribosome, positioning it for translation.</text>
</comment>
<comment type="subunit">
    <text evidence="1">Part of the 30S ribosomal subunit. Forms a tight complex with proteins S10 and S14.</text>
</comment>
<comment type="similarity">
    <text evidence="1">Belongs to the universal ribosomal protein uS3 family.</text>
</comment>
<proteinExistence type="inferred from homology"/>
<sequence length="218" mass="24322">MGQKVDPRGLRLGIVRDWDAKWYAGKKDFSNLLLEDVKIRDYIKSKLLAAGISRIHIERTANRVRIAIHTAKPGVVIGRGGTEVEVLRKELEKLTGRQISINIVEIKTPELDAQLVAENVAAQLQRRVAFRRAMKQAVGRAMKLGAKGIRISVAGRLAGAEIARTEWYSEGKVPLHTLRADIDYGFSEAKTTYGKIGVKVWIYRGEILPERAAREGGR</sequence>
<organism>
    <name type="scientific">Desulforudis audaxviator (strain MP104C)</name>
    <dbReference type="NCBI Taxonomy" id="477974"/>
    <lineage>
        <taxon>Bacteria</taxon>
        <taxon>Bacillati</taxon>
        <taxon>Bacillota</taxon>
        <taxon>Clostridia</taxon>
        <taxon>Thermoanaerobacterales</taxon>
        <taxon>Candidatus Desulforudaceae</taxon>
        <taxon>Candidatus Desulforudis</taxon>
    </lineage>
</organism>
<accession>B1I1J4</accession>
<reference key="1">
    <citation type="submission" date="2007-10" db="EMBL/GenBank/DDBJ databases">
        <title>Complete sequence of chromosome of Desulforudis audaxviator MP104C.</title>
        <authorList>
            <person name="Copeland A."/>
            <person name="Lucas S."/>
            <person name="Lapidus A."/>
            <person name="Barry K."/>
            <person name="Glavina del Rio T."/>
            <person name="Dalin E."/>
            <person name="Tice H."/>
            <person name="Bruce D."/>
            <person name="Pitluck S."/>
            <person name="Lowry S.R."/>
            <person name="Larimer F."/>
            <person name="Land M.L."/>
            <person name="Hauser L."/>
            <person name="Kyrpides N."/>
            <person name="Ivanova N.N."/>
            <person name="Richardson P."/>
        </authorList>
    </citation>
    <scope>NUCLEOTIDE SEQUENCE [LARGE SCALE GENOMIC DNA]</scope>
    <source>
        <strain>MP104C</strain>
    </source>
</reference>
<gene>
    <name evidence="1" type="primary">rpsC</name>
    <name type="ordered locus">Daud_0231</name>
</gene>
<name>RS3_DESAP</name>
<keyword id="KW-1185">Reference proteome</keyword>
<keyword id="KW-0687">Ribonucleoprotein</keyword>
<keyword id="KW-0689">Ribosomal protein</keyword>
<keyword id="KW-0694">RNA-binding</keyword>
<keyword id="KW-0699">rRNA-binding</keyword>
<protein>
    <recommendedName>
        <fullName evidence="1">Small ribosomal subunit protein uS3</fullName>
    </recommendedName>
    <alternativeName>
        <fullName evidence="2">30S ribosomal protein S3</fullName>
    </alternativeName>
</protein>